<keyword id="KW-0010">Activator</keyword>
<keyword id="KW-0112">Calmodulin-binding</keyword>
<keyword id="KW-0963">Cytoplasm</keyword>
<keyword id="KW-0221">Differentiation</keyword>
<keyword id="KW-0238">DNA-binding</keyword>
<keyword id="KW-0539">Nucleus</keyword>
<keyword id="KW-0726">Sexual differentiation</keyword>
<keyword id="KW-0804">Transcription</keyword>
<keyword id="KW-0805">Transcription regulation</keyword>
<feature type="chain" id="PRO_0000048676" description="Sex-determining region Y protein">
    <location>
        <begin position="1"/>
        <end position="219"/>
    </location>
</feature>
<feature type="DNA-binding region" description="HMG box" evidence="3">
    <location>
        <begin position="54"/>
        <end position="122"/>
    </location>
</feature>
<comment type="function">
    <text evidence="1 2">Transcriptional regulator that controls a genetic switch in male development. It is necessary and sufficient for initiating male sex determination by directing the development of supporting cell precursors (pre-Sertoli cells) as Sertoli rather than granulosa cells. Involved in different aspects of gene regulation including promoter activation or repression. Binds to the DNA consensus sequence 5'-[AT]AACAA[AT]-3'. SRY HMG box recognizes DNA by partial intercalation in the minor groove and promotes DNA bending. Also involved in pre-mRNA splicing (By similarity). In male adult brain involved in the maintenance of motor functions of dopaminergic neurons (By similarity).</text>
</comment>
<comment type="subunit">
    <text evidence="2">Interacts with CALM, EP300, HDAC3, KPNB1, ZNF208 isoform KRAB-O, PARP1, SLC9A3R2 and WT1. The interaction with EP300 modulates its DNA-binding activity. The interaction with KPNB1 is sensitive to dissociation by Ran in the GTP-bound form. Interaction with PARP1 impaired its DNA-binding activity.</text>
</comment>
<comment type="subcellular location">
    <subcellularLocation>
        <location evidence="2">Nucleus speckle</location>
    </subcellularLocation>
    <subcellularLocation>
        <location evidence="2">Cytoplasm</location>
    </subcellularLocation>
    <subcellularLocation>
        <location evidence="2">Nucleus</location>
    </subcellularLocation>
</comment>
<comment type="similarity">
    <text evidence="4">Belongs to the SRY family.</text>
</comment>
<comment type="online information" name="Protein Spotlight">
    <link uri="https://www.proteinspotlight.org/back_issues/080"/>
    <text>The tenuous nature of sex - Issue 80 of March 2007</text>
</comment>
<organism>
    <name type="scientific">Lutra lutra</name>
    <name type="common">European river otter</name>
    <dbReference type="NCBI Taxonomy" id="9657"/>
    <lineage>
        <taxon>Eukaryota</taxon>
        <taxon>Metazoa</taxon>
        <taxon>Chordata</taxon>
        <taxon>Craniata</taxon>
        <taxon>Vertebrata</taxon>
        <taxon>Euteleostomi</taxon>
        <taxon>Mammalia</taxon>
        <taxon>Eutheria</taxon>
        <taxon>Laurasiatheria</taxon>
        <taxon>Carnivora</taxon>
        <taxon>Caniformia</taxon>
        <taxon>Musteloidea</taxon>
        <taxon>Mustelidae</taxon>
        <taxon>Lutrinae</taxon>
        <taxon>Lutra</taxon>
    </lineage>
</organism>
<reference key="1">
    <citation type="submission" date="2003-09" db="EMBL/GenBank/DDBJ databases">
        <title>A phylogeny of the pinnipeds from mitochondrial and single copy nuclear gene sequences.</title>
        <authorList>
            <person name="Kinnear M.W."/>
            <person name="Walker G."/>
            <person name="Amos W."/>
        </authorList>
    </citation>
    <scope>NUCLEOTIDE SEQUENCE [GENOMIC DNA]</scope>
</reference>
<sequence length="219" mass="25332">MFGVLNSDNHCAAVQQGNILAFGRTSSEFWTNNPTSSYRCETGGNRTDSGQSHIRRPMNAFMVWSRDQRRKVALENPQMQNSEISKRLGYQWKMLTEAEKRPFFEEAQRIQAMHREKYPDYKYRPRRKAVPKNSDKLLPAASSSMLCRQGNVDERWYPFTWRGGRTRASHSGTEDRLNSSQAANIVRSLLQQEHHCSSTSLRHSPETLAIQLSTDFYPK</sequence>
<name>SRY_LUTLU</name>
<accession>Q6TC28</accession>
<dbReference type="EMBL" id="AY424667">
    <property type="protein sequence ID" value="AAR10378.1"/>
    <property type="molecule type" value="Genomic_DNA"/>
</dbReference>
<dbReference type="RefSeq" id="XP_047572972.1">
    <property type="nucleotide sequence ID" value="XM_047717016.1"/>
</dbReference>
<dbReference type="SMR" id="Q6TC28"/>
<dbReference type="GeneID" id="125092611"/>
<dbReference type="GO" id="GO:0005737">
    <property type="term" value="C:cytoplasm"/>
    <property type="evidence" value="ECO:0007669"/>
    <property type="project" value="UniProtKB-SubCell"/>
</dbReference>
<dbReference type="GO" id="GO:0016607">
    <property type="term" value="C:nuclear speck"/>
    <property type="evidence" value="ECO:0007669"/>
    <property type="project" value="UniProtKB-SubCell"/>
</dbReference>
<dbReference type="GO" id="GO:0005634">
    <property type="term" value="C:nucleus"/>
    <property type="evidence" value="ECO:0000250"/>
    <property type="project" value="UniProtKB"/>
</dbReference>
<dbReference type="GO" id="GO:0005516">
    <property type="term" value="F:calmodulin binding"/>
    <property type="evidence" value="ECO:0007669"/>
    <property type="project" value="UniProtKB-KW"/>
</dbReference>
<dbReference type="GO" id="GO:0001228">
    <property type="term" value="F:DNA-binding transcription activator activity, RNA polymerase II-specific"/>
    <property type="evidence" value="ECO:0007669"/>
    <property type="project" value="TreeGrafter"/>
</dbReference>
<dbReference type="GO" id="GO:0000978">
    <property type="term" value="F:RNA polymerase II cis-regulatory region sequence-specific DNA binding"/>
    <property type="evidence" value="ECO:0007669"/>
    <property type="project" value="TreeGrafter"/>
</dbReference>
<dbReference type="GO" id="GO:0030154">
    <property type="term" value="P:cell differentiation"/>
    <property type="evidence" value="ECO:0007669"/>
    <property type="project" value="UniProtKB-KW"/>
</dbReference>
<dbReference type="GO" id="GO:0030238">
    <property type="term" value="P:male sex determination"/>
    <property type="evidence" value="ECO:0007669"/>
    <property type="project" value="InterPro"/>
</dbReference>
<dbReference type="GO" id="GO:0007548">
    <property type="term" value="P:sex differentiation"/>
    <property type="evidence" value="ECO:0007669"/>
    <property type="project" value="UniProtKB-KW"/>
</dbReference>
<dbReference type="CDD" id="cd22028">
    <property type="entry name" value="HMG-box_SoxA_SoxB_SoxG"/>
    <property type="match status" value="1"/>
</dbReference>
<dbReference type="FunFam" id="1.10.30.10:FF:000002">
    <property type="entry name" value="transcription factor Sox-2"/>
    <property type="match status" value="1"/>
</dbReference>
<dbReference type="Gene3D" id="1.10.30.10">
    <property type="entry name" value="High mobility group box domain"/>
    <property type="match status" value="1"/>
</dbReference>
<dbReference type="InterPro" id="IPR009071">
    <property type="entry name" value="HMG_box_dom"/>
</dbReference>
<dbReference type="InterPro" id="IPR036910">
    <property type="entry name" value="HMG_box_dom_sf"/>
</dbReference>
<dbReference type="InterPro" id="IPR017253">
    <property type="entry name" value="SRY"/>
</dbReference>
<dbReference type="InterPro" id="IPR050140">
    <property type="entry name" value="SRY-related_HMG-box_TF-like"/>
</dbReference>
<dbReference type="PANTHER" id="PTHR10270:SF161">
    <property type="entry name" value="SEX-DETERMINING REGION Y PROTEIN"/>
    <property type="match status" value="1"/>
</dbReference>
<dbReference type="PANTHER" id="PTHR10270">
    <property type="entry name" value="SOX TRANSCRIPTION FACTOR"/>
    <property type="match status" value="1"/>
</dbReference>
<dbReference type="Pfam" id="PF00505">
    <property type="entry name" value="HMG_box"/>
    <property type="match status" value="1"/>
</dbReference>
<dbReference type="PIRSF" id="PIRSF037653">
    <property type="entry name" value="SRY"/>
    <property type="match status" value="1"/>
</dbReference>
<dbReference type="SMART" id="SM00398">
    <property type="entry name" value="HMG"/>
    <property type="match status" value="1"/>
</dbReference>
<dbReference type="SUPFAM" id="SSF47095">
    <property type="entry name" value="HMG-box"/>
    <property type="match status" value="1"/>
</dbReference>
<dbReference type="PROSITE" id="PS50118">
    <property type="entry name" value="HMG_BOX_2"/>
    <property type="match status" value="1"/>
</dbReference>
<protein>
    <recommendedName>
        <fullName>Sex-determining region Y protein</fullName>
    </recommendedName>
    <alternativeName>
        <fullName>Testis-determining factor</fullName>
    </alternativeName>
</protein>
<gene>
    <name type="primary">SRY</name>
    <name type="synonym">TDF</name>
</gene>
<evidence type="ECO:0000250" key="1">
    <source>
        <dbReference type="UniProtKB" id="P36394"/>
    </source>
</evidence>
<evidence type="ECO:0000250" key="2">
    <source>
        <dbReference type="UniProtKB" id="Q05066"/>
    </source>
</evidence>
<evidence type="ECO:0000255" key="3">
    <source>
        <dbReference type="PROSITE-ProRule" id="PRU00267"/>
    </source>
</evidence>
<evidence type="ECO:0000305" key="4"/>
<proteinExistence type="inferred from homology"/>